<evidence type="ECO:0000255" key="1">
    <source>
        <dbReference type="HAMAP-Rule" id="MF_01224"/>
    </source>
</evidence>
<proteinExistence type="inferred from homology"/>
<gene>
    <name evidence="1" type="primary">moaC</name>
    <name type="ordered locus">SAR2358</name>
</gene>
<dbReference type="EC" id="4.6.1.17" evidence="1"/>
<dbReference type="EMBL" id="BX571856">
    <property type="protein sequence ID" value="CAG41339.1"/>
    <property type="molecule type" value="Genomic_DNA"/>
</dbReference>
<dbReference type="RefSeq" id="WP_000134529.1">
    <property type="nucleotide sequence ID" value="NC_002952.2"/>
</dbReference>
<dbReference type="SMR" id="Q6GEG0"/>
<dbReference type="KEGG" id="sar:SAR2358"/>
<dbReference type="HOGENOM" id="CLU_074693_1_1_9"/>
<dbReference type="UniPathway" id="UPA00344"/>
<dbReference type="Proteomes" id="UP000000596">
    <property type="component" value="Chromosome"/>
</dbReference>
<dbReference type="GO" id="GO:0061799">
    <property type="term" value="F:cyclic pyranopterin monophosphate synthase activity"/>
    <property type="evidence" value="ECO:0007669"/>
    <property type="project" value="UniProtKB-UniRule"/>
</dbReference>
<dbReference type="GO" id="GO:0006777">
    <property type="term" value="P:Mo-molybdopterin cofactor biosynthetic process"/>
    <property type="evidence" value="ECO:0007669"/>
    <property type="project" value="UniProtKB-UniRule"/>
</dbReference>
<dbReference type="CDD" id="cd01420">
    <property type="entry name" value="MoaC_PE"/>
    <property type="match status" value="1"/>
</dbReference>
<dbReference type="Gene3D" id="3.30.70.640">
    <property type="entry name" value="Molybdopterin cofactor biosynthesis C (MoaC) domain"/>
    <property type="match status" value="1"/>
</dbReference>
<dbReference type="HAMAP" id="MF_01224_B">
    <property type="entry name" value="MoaC_B"/>
    <property type="match status" value="1"/>
</dbReference>
<dbReference type="InterPro" id="IPR023045">
    <property type="entry name" value="MoaC"/>
</dbReference>
<dbReference type="InterPro" id="IPR047594">
    <property type="entry name" value="MoaC_bact/euk"/>
</dbReference>
<dbReference type="InterPro" id="IPR036522">
    <property type="entry name" value="MoaC_sf"/>
</dbReference>
<dbReference type="InterPro" id="IPR050105">
    <property type="entry name" value="MoCo_biosynth_MoaA/MoaC"/>
</dbReference>
<dbReference type="InterPro" id="IPR002820">
    <property type="entry name" value="Mopterin_CF_biosynth-C_dom"/>
</dbReference>
<dbReference type="NCBIfam" id="TIGR00581">
    <property type="entry name" value="moaC"/>
    <property type="match status" value="1"/>
</dbReference>
<dbReference type="NCBIfam" id="NF006870">
    <property type="entry name" value="PRK09364.1"/>
    <property type="match status" value="1"/>
</dbReference>
<dbReference type="PANTHER" id="PTHR22960">
    <property type="entry name" value="MOLYBDOPTERIN COFACTOR SYNTHESIS PROTEIN A"/>
    <property type="match status" value="1"/>
</dbReference>
<dbReference type="Pfam" id="PF01967">
    <property type="entry name" value="MoaC"/>
    <property type="match status" value="1"/>
</dbReference>
<dbReference type="SUPFAM" id="SSF55040">
    <property type="entry name" value="Molybdenum cofactor biosynthesis protein C, MoaC"/>
    <property type="match status" value="1"/>
</dbReference>
<organism>
    <name type="scientific">Staphylococcus aureus (strain MRSA252)</name>
    <dbReference type="NCBI Taxonomy" id="282458"/>
    <lineage>
        <taxon>Bacteria</taxon>
        <taxon>Bacillati</taxon>
        <taxon>Bacillota</taxon>
        <taxon>Bacilli</taxon>
        <taxon>Bacillales</taxon>
        <taxon>Staphylococcaceae</taxon>
        <taxon>Staphylococcus</taxon>
    </lineage>
</organism>
<comment type="function">
    <text evidence="1">Catalyzes the conversion of (8S)-3',8-cyclo-7,8-dihydroguanosine 5'-triphosphate to cyclic pyranopterin monophosphate (cPMP).</text>
</comment>
<comment type="catalytic activity">
    <reaction evidence="1">
        <text>(8S)-3',8-cyclo-7,8-dihydroguanosine 5'-triphosphate = cyclic pyranopterin phosphate + diphosphate</text>
        <dbReference type="Rhea" id="RHEA:49580"/>
        <dbReference type="ChEBI" id="CHEBI:33019"/>
        <dbReference type="ChEBI" id="CHEBI:59648"/>
        <dbReference type="ChEBI" id="CHEBI:131766"/>
        <dbReference type="EC" id="4.6.1.17"/>
    </reaction>
</comment>
<comment type="pathway">
    <text evidence="1">Cofactor biosynthesis; molybdopterin biosynthesis.</text>
</comment>
<comment type="subunit">
    <text evidence="1">Homohexamer; trimer of dimers.</text>
</comment>
<comment type="similarity">
    <text evidence="1">Belongs to the MoaC family.</text>
</comment>
<reference key="1">
    <citation type="journal article" date="2004" name="Proc. Natl. Acad. Sci. U.S.A.">
        <title>Complete genomes of two clinical Staphylococcus aureus strains: evidence for the rapid evolution of virulence and drug resistance.</title>
        <authorList>
            <person name="Holden M.T.G."/>
            <person name="Feil E.J."/>
            <person name="Lindsay J.A."/>
            <person name="Peacock S.J."/>
            <person name="Day N.P.J."/>
            <person name="Enright M.C."/>
            <person name="Foster T.J."/>
            <person name="Moore C.E."/>
            <person name="Hurst L."/>
            <person name="Atkin R."/>
            <person name="Barron A."/>
            <person name="Bason N."/>
            <person name="Bentley S.D."/>
            <person name="Chillingworth C."/>
            <person name="Chillingworth T."/>
            <person name="Churcher C."/>
            <person name="Clark L."/>
            <person name="Corton C."/>
            <person name="Cronin A."/>
            <person name="Doggett J."/>
            <person name="Dowd L."/>
            <person name="Feltwell T."/>
            <person name="Hance Z."/>
            <person name="Harris B."/>
            <person name="Hauser H."/>
            <person name="Holroyd S."/>
            <person name="Jagels K."/>
            <person name="James K.D."/>
            <person name="Lennard N."/>
            <person name="Line A."/>
            <person name="Mayes R."/>
            <person name="Moule S."/>
            <person name="Mungall K."/>
            <person name="Ormond D."/>
            <person name="Quail M.A."/>
            <person name="Rabbinowitsch E."/>
            <person name="Rutherford K.M."/>
            <person name="Sanders M."/>
            <person name="Sharp S."/>
            <person name="Simmonds M."/>
            <person name="Stevens K."/>
            <person name="Whitehead S."/>
            <person name="Barrell B.G."/>
            <person name="Spratt B.G."/>
            <person name="Parkhill J."/>
        </authorList>
    </citation>
    <scope>NUCLEOTIDE SEQUENCE [LARGE SCALE GENOMIC DNA]</scope>
    <source>
        <strain>MRSA252</strain>
    </source>
</reference>
<sequence>MTEFTHINQQGHAKMVDVSDKQITKRTAVAHSSITVNETIYKQISNNTNTKGNVLNTAQIAGIMAAKNTSTIIPMCHPLPLTGIDVHFNWDETNAPLYTLNIQTTVSTTGKTGVEMEALTAASATALTIYDMTKAVDKGMIIGETYLESKSGGKSGDFQRQLDQ</sequence>
<keyword id="KW-0456">Lyase</keyword>
<keyword id="KW-0501">Molybdenum cofactor biosynthesis</keyword>
<accession>Q6GEG0</accession>
<feature type="chain" id="PRO_0000097832" description="Cyclic pyranopterin monophosphate synthase">
    <location>
        <begin position="1"/>
        <end position="164"/>
    </location>
</feature>
<feature type="active site" evidence="1">
    <location>
        <position position="131"/>
    </location>
</feature>
<feature type="binding site" evidence="1">
    <location>
        <begin position="75"/>
        <end position="77"/>
    </location>
    <ligand>
        <name>substrate</name>
    </ligand>
</feature>
<feature type="binding site" evidence="1">
    <location>
        <begin position="116"/>
        <end position="117"/>
    </location>
    <ligand>
        <name>substrate</name>
    </ligand>
</feature>
<protein>
    <recommendedName>
        <fullName evidence="1">Cyclic pyranopterin monophosphate synthase</fullName>
        <ecNumber evidence="1">4.6.1.17</ecNumber>
    </recommendedName>
    <alternativeName>
        <fullName evidence="1">Molybdenum cofactor biosynthesis protein C</fullName>
    </alternativeName>
</protein>
<name>MOAC_STAAR</name>